<keyword id="KW-0749">Sporulation</keyword>
<evidence type="ECO:0000255" key="1">
    <source>
        <dbReference type="HAMAP-Rule" id="MF_00665"/>
    </source>
</evidence>
<evidence type="ECO:0000256" key="2">
    <source>
        <dbReference type="SAM" id="MobiDB-lite"/>
    </source>
</evidence>
<reference key="1">
    <citation type="journal article" date="2007" name="Nat. Biotechnol.">
        <title>Comparative analysis of the complete genome sequence of the plant growth-promoting bacterium Bacillus amyloliquefaciens FZB42.</title>
        <authorList>
            <person name="Chen X.H."/>
            <person name="Koumoutsi A."/>
            <person name="Scholz R."/>
            <person name="Eisenreich A."/>
            <person name="Schneider K."/>
            <person name="Heinemeyer I."/>
            <person name="Morgenstern B."/>
            <person name="Voss B."/>
            <person name="Hess W.R."/>
            <person name="Reva O."/>
            <person name="Junge H."/>
            <person name="Voigt B."/>
            <person name="Jungblut P.R."/>
            <person name="Vater J."/>
            <person name="Suessmuth R."/>
            <person name="Liesegang H."/>
            <person name="Strittmatter A."/>
            <person name="Gottschalk G."/>
            <person name="Borriss R."/>
        </authorList>
    </citation>
    <scope>NUCLEOTIDE SEQUENCE [LARGE SCALE GENOMIC DNA]</scope>
    <source>
        <strain>DSM 23117 / BGSC 10A6 / LMG 26770 / FZB42</strain>
    </source>
</reference>
<dbReference type="EMBL" id="CP000560">
    <property type="protein sequence ID" value="ABS74142.1"/>
    <property type="molecule type" value="Genomic_DNA"/>
</dbReference>
<dbReference type="RefSeq" id="WP_003153982.1">
    <property type="nucleotide sequence ID" value="NC_009725.2"/>
</dbReference>
<dbReference type="GeneID" id="93080911"/>
<dbReference type="KEGG" id="bay:RBAM_017790"/>
<dbReference type="HOGENOM" id="CLU_206342_0_0_9"/>
<dbReference type="Proteomes" id="UP000001120">
    <property type="component" value="Chromosome"/>
</dbReference>
<dbReference type="GO" id="GO:0042601">
    <property type="term" value="C:endospore-forming forespore"/>
    <property type="evidence" value="ECO:0007669"/>
    <property type="project" value="InterPro"/>
</dbReference>
<dbReference type="GO" id="GO:0030436">
    <property type="term" value="P:asexual sporulation"/>
    <property type="evidence" value="ECO:0007669"/>
    <property type="project" value="UniProtKB-UniRule"/>
</dbReference>
<dbReference type="GO" id="GO:0030435">
    <property type="term" value="P:sporulation resulting in formation of a cellular spore"/>
    <property type="evidence" value="ECO:0007669"/>
    <property type="project" value="UniProtKB-KW"/>
</dbReference>
<dbReference type="HAMAP" id="MF_00665">
    <property type="entry name" value="SspO"/>
    <property type="match status" value="1"/>
</dbReference>
<dbReference type="InterPro" id="IPR012613">
    <property type="entry name" value="SASP_SspO"/>
</dbReference>
<dbReference type="NCBIfam" id="TIGR02864">
    <property type="entry name" value="spore_sspO"/>
    <property type="match status" value="1"/>
</dbReference>
<dbReference type="Pfam" id="PF08175">
    <property type="entry name" value="SspO"/>
    <property type="match status" value="1"/>
</dbReference>
<organism>
    <name type="scientific">Bacillus velezensis (strain DSM 23117 / BGSC 10A6 / LMG 26770 / FZB42)</name>
    <name type="common">Bacillus amyloliquefaciens subsp. plantarum</name>
    <dbReference type="NCBI Taxonomy" id="326423"/>
    <lineage>
        <taxon>Bacteria</taxon>
        <taxon>Bacillati</taxon>
        <taxon>Bacillota</taxon>
        <taxon>Bacilli</taxon>
        <taxon>Bacillales</taxon>
        <taxon>Bacillaceae</taxon>
        <taxon>Bacillus</taxon>
        <taxon>Bacillus amyloliquefaciens group</taxon>
    </lineage>
</organism>
<sequence length="48" mass="5485">MVKRKANHVINGMNDAKSQGKGAGYIENDQLVLTEEERQNNKKRKTNQ</sequence>
<comment type="subcellular location">
    <subcellularLocation>
        <location evidence="1">Spore core</location>
    </subcellularLocation>
</comment>
<comment type="induction">
    <text evidence="1">Expressed only in the forespore compartment of sporulating cells.</text>
</comment>
<comment type="similarity">
    <text evidence="1">Belongs to the SspO family.</text>
</comment>
<proteinExistence type="inferred from homology"/>
<protein>
    <recommendedName>
        <fullName evidence="1">Small, acid-soluble spore protein O</fullName>
        <shortName evidence="1">SASP O</shortName>
    </recommendedName>
</protein>
<feature type="chain" id="PRO_1000044692" description="Small, acid-soluble spore protein O">
    <location>
        <begin position="1"/>
        <end position="48"/>
    </location>
</feature>
<feature type="region of interest" description="Disordered" evidence="2">
    <location>
        <begin position="1"/>
        <end position="23"/>
    </location>
</feature>
<gene>
    <name evidence="1" type="primary">sspO</name>
    <name type="ordered locus">RBAM_017790</name>
</gene>
<accession>A7Z566</accession>
<name>SSPO_BACVZ</name>